<sequence length="160" mass="17988">MKNIVDDKILLTQQKLEEIEKELEHLINVERVNVIQEIKDARSQGDLSENAEYDVAREKQGIIESRIRELETIISKAKIIKADLGSSRVSIGSKVSLENVESGEIQTFQIVSSIDADPFKSKISNFSPIAQALLGQHQGDEVEVDVNEKYSVRILEVINE</sequence>
<gene>
    <name evidence="1" type="primary">greA</name>
    <name type="ordered locus">MHJ_0667</name>
</gene>
<evidence type="ECO:0000255" key="1">
    <source>
        <dbReference type="HAMAP-Rule" id="MF_00105"/>
    </source>
</evidence>
<name>GREA_MESHJ</name>
<feature type="chain" id="PRO_1000202866" description="Transcription elongation factor GreA">
    <location>
        <begin position="1"/>
        <end position="160"/>
    </location>
</feature>
<feature type="coiled-coil region" evidence="1">
    <location>
        <begin position="3"/>
        <end position="84"/>
    </location>
</feature>
<reference key="1">
    <citation type="journal article" date="2005" name="J. Bacteriol.">
        <title>Swine and poultry pathogens: the complete genome sequences of two strains of Mycoplasma hyopneumoniae and a strain of Mycoplasma synoviae.</title>
        <authorList>
            <person name="Vasconcelos A.T.R."/>
            <person name="Ferreira H.B."/>
            <person name="Bizarro C.V."/>
            <person name="Bonatto S.L."/>
            <person name="Carvalho M.O."/>
            <person name="Pinto P.M."/>
            <person name="Almeida D.F."/>
            <person name="Almeida L.G.P."/>
            <person name="Almeida R."/>
            <person name="Alves-Junior L."/>
            <person name="Assuncao E.N."/>
            <person name="Azevedo V.A.C."/>
            <person name="Bogo M.R."/>
            <person name="Brigido M.M."/>
            <person name="Brocchi M."/>
            <person name="Burity H.A."/>
            <person name="Camargo A.A."/>
            <person name="Camargo S.S."/>
            <person name="Carepo M.S."/>
            <person name="Carraro D.M."/>
            <person name="de Mattos Cascardo J.C."/>
            <person name="Castro L.A."/>
            <person name="Cavalcanti G."/>
            <person name="Chemale G."/>
            <person name="Collevatti R.G."/>
            <person name="Cunha C.W."/>
            <person name="Dallagiovanna B."/>
            <person name="Dambros B.P."/>
            <person name="Dellagostin O.A."/>
            <person name="Falcao C."/>
            <person name="Fantinatti-Garboggini F."/>
            <person name="Felipe M.S.S."/>
            <person name="Fiorentin L."/>
            <person name="Franco G.R."/>
            <person name="Freitas N.S.A."/>
            <person name="Frias D."/>
            <person name="Grangeiro T.B."/>
            <person name="Grisard E.C."/>
            <person name="Guimaraes C.T."/>
            <person name="Hungria M."/>
            <person name="Jardim S.N."/>
            <person name="Krieger M.A."/>
            <person name="Laurino J.P."/>
            <person name="Lima L.F.A."/>
            <person name="Lopes M.I."/>
            <person name="Loreto E.L.S."/>
            <person name="Madeira H.M.F."/>
            <person name="Manfio G.P."/>
            <person name="Maranhao A.Q."/>
            <person name="Martinkovics C.T."/>
            <person name="Medeiros S.R.B."/>
            <person name="Moreira M.A.M."/>
            <person name="Neiva M."/>
            <person name="Ramalho-Neto C.E."/>
            <person name="Nicolas M.F."/>
            <person name="Oliveira S.C."/>
            <person name="Paixao R.F.C."/>
            <person name="Pedrosa F.O."/>
            <person name="Pena S.D.J."/>
            <person name="Pereira M."/>
            <person name="Pereira-Ferrari L."/>
            <person name="Piffer I."/>
            <person name="Pinto L.S."/>
            <person name="Potrich D.P."/>
            <person name="Salim A.C.M."/>
            <person name="Santos F.R."/>
            <person name="Schmitt R."/>
            <person name="Schneider M.P.C."/>
            <person name="Schrank A."/>
            <person name="Schrank I.S."/>
            <person name="Schuck A.F."/>
            <person name="Seuanez H.N."/>
            <person name="Silva D.W."/>
            <person name="Silva R."/>
            <person name="Silva S.C."/>
            <person name="Soares C.M.A."/>
            <person name="Souza K.R.L."/>
            <person name="Souza R.C."/>
            <person name="Staats C.C."/>
            <person name="Steffens M.B.R."/>
            <person name="Teixeira S.M.R."/>
            <person name="Urmenyi T.P."/>
            <person name="Vainstein M.H."/>
            <person name="Zuccherato L.W."/>
            <person name="Simpson A.J.G."/>
            <person name="Zaha A."/>
        </authorList>
    </citation>
    <scope>NUCLEOTIDE SEQUENCE [LARGE SCALE GENOMIC DNA]</scope>
    <source>
        <strain>J / ATCC 25934 / NCTC 10110</strain>
    </source>
</reference>
<keyword id="KW-0175">Coiled coil</keyword>
<keyword id="KW-0238">DNA-binding</keyword>
<keyword id="KW-0804">Transcription</keyword>
<keyword id="KW-0805">Transcription regulation</keyword>
<dbReference type="EMBL" id="AE017243">
    <property type="protein sequence ID" value="AAZ44750.1"/>
    <property type="molecule type" value="Genomic_DNA"/>
</dbReference>
<dbReference type="RefSeq" id="WP_011284387.1">
    <property type="nucleotide sequence ID" value="NC_007295.1"/>
</dbReference>
<dbReference type="SMR" id="Q4A921"/>
<dbReference type="GeneID" id="41334971"/>
<dbReference type="KEGG" id="mhj:MHJ_0667"/>
<dbReference type="eggNOG" id="COG0782">
    <property type="taxonomic scope" value="Bacteria"/>
</dbReference>
<dbReference type="HOGENOM" id="CLU_101379_2_1_14"/>
<dbReference type="OrthoDB" id="9808774at2"/>
<dbReference type="Proteomes" id="UP000000548">
    <property type="component" value="Chromosome"/>
</dbReference>
<dbReference type="GO" id="GO:0003677">
    <property type="term" value="F:DNA binding"/>
    <property type="evidence" value="ECO:0007669"/>
    <property type="project" value="UniProtKB-UniRule"/>
</dbReference>
<dbReference type="GO" id="GO:0070063">
    <property type="term" value="F:RNA polymerase binding"/>
    <property type="evidence" value="ECO:0007669"/>
    <property type="project" value="InterPro"/>
</dbReference>
<dbReference type="GO" id="GO:0006354">
    <property type="term" value="P:DNA-templated transcription elongation"/>
    <property type="evidence" value="ECO:0007669"/>
    <property type="project" value="TreeGrafter"/>
</dbReference>
<dbReference type="GO" id="GO:0032784">
    <property type="term" value="P:regulation of DNA-templated transcription elongation"/>
    <property type="evidence" value="ECO:0007669"/>
    <property type="project" value="UniProtKB-UniRule"/>
</dbReference>
<dbReference type="FunFam" id="1.10.287.180:FF:000001">
    <property type="entry name" value="Transcription elongation factor GreA"/>
    <property type="match status" value="1"/>
</dbReference>
<dbReference type="Gene3D" id="3.10.50.30">
    <property type="entry name" value="Transcription elongation factor, GreA/GreB, C-terminal domain"/>
    <property type="match status" value="1"/>
</dbReference>
<dbReference type="Gene3D" id="1.10.287.180">
    <property type="entry name" value="Transcription elongation factor, GreA/GreB, N-terminal domain"/>
    <property type="match status" value="1"/>
</dbReference>
<dbReference type="HAMAP" id="MF_00105">
    <property type="entry name" value="GreA_GreB"/>
    <property type="match status" value="1"/>
</dbReference>
<dbReference type="InterPro" id="IPR036953">
    <property type="entry name" value="GreA/GreB_C_sf"/>
</dbReference>
<dbReference type="InterPro" id="IPR018151">
    <property type="entry name" value="TF_GreA/GreB_CS"/>
</dbReference>
<dbReference type="InterPro" id="IPR006359">
    <property type="entry name" value="Tscrpt_elong_fac_GreA"/>
</dbReference>
<dbReference type="InterPro" id="IPR028624">
    <property type="entry name" value="Tscrpt_elong_fac_GreA/B"/>
</dbReference>
<dbReference type="InterPro" id="IPR001437">
    <property type="entry name" value="Tscrpt_elong_fac_GreA/B_C"/>
</dbReference>
<dbReference type="InterPro" id="IPR023459">
    <property type="entry name" value="Tscrpt_elong_fac_GreA/B_fam"/>
</dbReference>
<dbReference type="InterPro" id="IPR022691">
    <property type="entry name" value="Tscrpt_elong_fac_GreA/B_N"/>
</dbReference>
<dbReference type="InterPro" id="IPR036805">
    <property type="entry name" value="Tscrpt_elong_fac_GreA/B_N_sf"/>
</dbReference>
<dbReference type="NCBIfam" id="TIGR01462">
    <property type="entry name" value="greA"/>
    <property type="match status" value="1"/>
</dbReference>
<dbReference type="NCBIfam" id="NF001263">
    <property type="entry name" value="PRK00226.1-4"/>
    <property type="match status" value="1"/>
</dbReference>
<dbReference type="PANTHER" id="PTHR30437">
    <property type="entry name" value="TRANSCRIPTION ELONGATION FACTOR GREA"/>
    <property type="match status" value="1"/>
</dbReference>
<dbReference type="PANTHER" id="PTHR30437:SF4">
    <property type="entry name" value="TRANSCRIPTION ELONGATION FACTOR GREA"/>
    <property type="match status" value="1"/>
</dbReference>
<dbReference type="Pfam" id="PF01272">
    <property type="entry name" value="GreA_GreB"/>
    <property type="match status" value="1"/>
</dbReference>
<dbReference type="Pfam" id="PF03449">
    <property type="entry name" value="GreA_GreB_N"/>
    <property type="match status" value="1"/>
</dbReference>
<dbReference type="PIRSF" id="PIRSF006092">
    <property type="entry name" value="GreA_GreB"/>
    <property type="match status" value="1"/>
</dbReference>
<dbReference type="SUPFAM" id="SSF54534">
    <property type="entry name" value="FKBP-like"/>
    <property type="match status" value="1"/>
</dbReference>
<dbReference type="SUPFAM" id="SSF46557">
    <property type="entry name" value="GreA transcript cleavage protein, N-terminal domain"/>
    <property type="match status" value="1"/>
</dbReference>
<dbReference type="PROSITE" id="PS00829">
    <property type="entry name" value="GREAB_1"/>
    <property type="match status" value="1"/>
</dbReference>
<dbReference type="PROSITE" id="PS00830">
    <property type="entry name" value="GREAB_2"/>
    <property type="match status" value="1"/>
</dbReference>
<accession>Q4A921</accession>
<organism>
    <name type="scientific">Mesomycoplasma hyopneumoniae (strain J / ATCC 25934 / NCTC 10110)</name>
    <name type="common">Mycoplasma hyopneumoniae</name>
    <dbReference type="NCBI Taxonomy" id="262719"/>
    <lineage>
        <taxon>Bacteria</taxon>
        <taxon>Bacillati</taxon>
        <taxon>Mycoplasmatota</taxon>
        <taxon>Mycoplasmoidales</taxon>
        <taxon>Metamycoplasmataceae</taxon>
        <taxon>Mesomycoplasma</taxon>
    </lineage>
</organism>
<protein>
    <recommendedName>
        <fullName evidence="1">Transcription elongation factor GreA</fullName>
    </recommendedName>
    <alternativeName>
        <fullName evidence="1">Transcript cleavage factor GreA</fullName>
    </alternativeName>
</protein>
<comment type="function">
    <text evidence="1">Necessary for efficient RNA polymerase transcription elongation past template-encoded arresting sites. The arresting sites in DNA have the property of trapping a certain fraction of elongating RNA polymerases that pass through, resulting in locked ternary complexes. Cleavage of the nascent transcript by cleavage factors such as GreA or GreB allows the resumption of elongation from the new 3'terminus. GreA releases sequences of 2 to 3 nucleotides.</text>
</comment>
<comment type="similarity">
    <text evidence="1">Belongs to the GreA/GreB family.</text>
</comment>
<proteinExistence type="inferred from homology"/>